<accession>B8IMY6</accession>
<proteinExistence type="inferred from homology"/>
<sequence length="132" mass="14357">MIIGIGSDLCDIRRITRSLERFGDRFTHRVFTEGERARSDRRAARAPSYARRFAAKEACAKALGTGMAQGVFWRDMEVVNLPSGRPTLRLTGGAAAQLAAITPAGHRALVHVTLTDDPPLAQAFVVIEALPE</sequence>
<dbReference type="EC" id="2.7.8.7" evidence="1"/>
<dbReference type="EMBL" id="CP001349">
    <property type="protein sequence ID" value="ACL62102.1"/>
    <property type="molecule type" value="Genomic_DNA"/>
</dbReference>
<dbReference type="RefSeq" id="WP_015933660.1">
    <property type="nucleotide sequence ID" value="NC_011894.1"/>
</dbReference>
<dbReference type="SMR" id="B8IMY6"/>
<dbReference type="STRING" id="460265.Mnod_7365"/>
<dbReference type="KEGG" id="mno:Mnod_7365"/>
<dbReference type="eggNOG" id="COG0736">
    <property type="taxonomic scope" value="Bacteria"/>
</dbReference>
<dbReference type="HOGENOM" id="CLU_089696_0_2_5"/>
<dbReference type="OrthoDB" id="517356at2"/>
<dbReference type="Proteomes" id="UP000008207">
    <property type="component" value="Chromosome"/>
</dbReference>
<dbReference type="GO" id="GO:0005737">
    <property type="term" value="C:cytoplasm"/>
    <property type="evidence" value="ECO:0007669"/>
    <property type="project" value="UniProtKB-SubCell"/>
</dbReference>
<dbReference type="GO" id="GO:0008897">
    <property type="term" value="F:holo-[acyl-carrier-protein] synthase activity"/>
    <property type="evidence" value="ECO:0007669"/>
    <property type="project" value="UniProtKB-UniRule"/>
</dbReference>
<dbReference type="GO" id="GO:0000287">
    <property type="term" value="F:magnesium ion binding"/>
    <property type="evidence" value="ECO:0007669"/>
    <property type="project" value="UniProtKB-UniRule"/>
</dbReference>
<dbReference type="GO" id="GO:0006633">
    <property type="term" value="P:fatty acid biosynthetic process"/>
    <property type="evidence" value="ECO:0007669"/>
    <property type="project" value="UniProtKB-UniRule"/>
</dbReference>
<dbReference type="Gene3D" id="3.90.470.20">
    <property type="entry name" value="4'-phosphopantetheinyl transferase domain"/>
    <property type="match status" value="1"/>
</dbReference>
<dbReference type="HAMAP" id="MF_00101">
    <property type="entry name" value="AcpS"/>
    <property type="match status" value="1"/>
</dbReference>
<dbReference type="InterPro" id="IPR008278">
    <property type="entry name" value="4-PPantetheinyl_Trfase_dom"/>
</dbReference>
<dbReference type="InterPro" id="IPR037143">
    <property type="entry name" value="4-PPantetheinyl_Trfase_dom_sf"/>
</dbReference>
<dbReference type="InterPro" id="IPR002582">
    <property type="entry name" value="ACPS"/>
</dbReference>
<dbReference type="InterPro" id="IPR004568">
    <property type="entry name" value="Ppantetheine-prot_Trfase_dom"/>
</dbReference>
<dbReference type="NCBIfam" id="TIGR00516">
    <property type="entry name" value="acpS"/>
    <property type="match status" value="1"/>
</dbReference>
<dbReference type="NCBIfam" id="TIGR00556">
    <property type="entry name" value="pantethn_trn"/>
    <property type="match status" value="1"/>
</dbReference>
<dbReference type="Pfam" id="PF01648">
    <property type="entry name" value="ACPS"/>
    <property type="match status" value="1"/>
</dbReference>
<dbReference type="SUPFAM" id="SSF56214">
    <property type="entry name" value="4'-phosphopantetheinyl transferase"/>
    <property type="match status" value="1"/>
</dbReference>
<feature type="chain" id="PRO_1000118816" description="Holo-[acyl-carrier-protein] synthase">
    <location>
        <begin position="1"/>
        <end position="132"/>
    </location>
</feature>
<feature type="binding site" evidence="1">
    <location>
        <position position="8"/>
    </location>
    <ligand>
        <name>Mg(2+)</name>
        <dbReference type="ChEBI" id="CHEBI:18420"/>
    </ligand>
</feature>
<feature type="binding site" evidence="1">
    <location>
        <position position="57"/>
    </location>
    <ligand>
        <name>Mg(2+)</name>
        <dbReference type="ChEBI" id="CHEBI:18420"/>
    </ligand>
</feature>
<protein>
    <recommendedName>
        <fullName evidence="1">Holo-[acyl-carrier-protein] synthase</fullName>
        <shortName evidence="1">Holo-ACP synthase</shortName>
        <ecNumber evidence="1">2.7.8.7</ecNumber>
    </recommendedName>
    <alternativeName>
        <fullName evidence="1">4'-phosphopantetheinyl transferase AcpS</fullName>
    </alternativeName>
</protein>
<keyword id="KW-0963">Cytoplasm</keyword>
<keyword id="KW-0275">Fatty acid biosynthesis</keyword>
<keyword id="KW-0276">Fatty acid metabolism</keyword>
<keyword id="KW-0444">Lipid biosynthesis</keyword>
<keyword id="KW-0443">Lipid metabolism</keyword>
<keyword id="KW-0460">Magnesium</keyword>
<keyword id="KW-0479">Metal-binding</keyword>
<keyword id="KW-1185">Reference proteome</keyword>
<keyword id="KW-0808">Transferase</keyword>
<comment type="function">
    <text evidence="1">Transfers the 4'-phosphopantetheine moiety from coenzyme A to a Ser of acyl-carrier-protein.</text>
</comment>
<comment type="catalytic activity">
    <reaction evidence="1">
        <text>apo-[ACP] + CoA = holo-[ACP] + adenosine 3',5'-bisphosphate + H(+)</text>
        <dbReference type="Rhea" id="RHEA:12068"/>
        <dbReference type="Rhea" id="RHEA-COMP:9685"/>
        <dbReference type="Rhea" id="RHEA-COMP:9690"/>
        <dbReference type="ChEBI" id="CHEBI:15378"/>
        <dbReference type="ChEBI" id="CHEBI:29999"/>
        <dbReference type="ChEBI" id="CHEBI:57287"/>
        <dbReference type="ChEBI" id="CHEBI:58343"/>
        <dbReference type="ChEBI" id="CHEBI:64479"/>
        <dbReference type="EC" id="2.7.8.7"/>
    </reaction>
</comment>
<comment type="cofactor">
    <cofactor evidence="1">
        <name>Mg(2+)</name>
        <dbReference type="ChEBI" id="CHEBI:18420"/>
    </cofactor>
</comment>
<comment type="subcellular location">
    <subcellularLocation>
        <location evidence="1">Cytoplasm</location>
    </subcellularLocation>
</comment>
<comment type="similarity">
    <text evidence="1">Belongs to the P-Pant transferase superfamily. AcpS family.</text>
</comment>
<organism>
    <name type="scientific">Methylobacterium nodulans (strain LMG 21967 / CNCM I-2342 / ORS 2060)</name>
    <dbReference type="NCBI Taxonomy" id="460265"/>
    <lineage>
        <taxon>Bacteria</taxon>
        <taxon>Pseudomonadati</taxon>
        <taxon>Pseudomonadota</taxon>
        <taxon>Alphaproteobacteria</taxon>
        <taxon>Hyphomicrobiales</taxon>
        <taxon>Methylobacteriaceae</taxon>
        <taxon>Methylobacterium</taxon>
    </lineage>
</organism>
<name>ACPS_METNO</name>
<evidence type="ECO:0000255" key="1">
    <source>
        <dbReference type="HAMAP-Rule" id="MF_00101"/>
    </source>
</evidence>
<gene>
    <name evidence="1" type="primary">acpS</name>
    <name type="ordered locus">Mnod_7365</name>
</gene>
<reference key="1">
    <citation type="submission" date="2009-01" db="EMBL/GenBank/DDBJ databases">
        <title>Complete sequence of chromosome of Methylobacterium nodulans ORS 2060.</title>
        <authorList>
            <consortium name="US DOE Joint Genome Institute"/>
            <person name="Lucas S."/>
            <person name="Copeland A."/>
            <person name="Lapidus A."/>
            <person name="Glavina del Rio T."/>
            <person name="Dalin E."/>
            <person name="Tice H."/>
            <person name="Bruce D."/>
            <person name="Goodwin L."/>
            <person name="Pitluck S."/>
            <person name="Sims D."/>
            <person name="Brettin T."/>
            <person name="Detter J.C."/>
            <person name="Han C."/>
            <person name="Larimer F."/>
            <person name="Land M."/>
            <person name="Hauser L."/>
            <person name="Kyrpides N."/>
            <person name="Ivanova N."/>
            <person name="Marx C.J."/>
            <person name="Richardson P."/>
        </authorList>
    </citation>
    <scope>NUCLEOTIDE SEQUENCE [LARGE SCALE GENOMIC DNA]</scope>
    <source>
        <strain>LMG 21967 / CNCM I-2342 / ORS 2060</strain>
    </source>
</reference>